<proteinExistence type="inferred from homology"/>
<evidence type="ECO:0000255" key="1">
    <source>
        <dbReference type="HAMAP-Rule" id="MF_00797"/>
    </source>
</evidence>
<feature type="chain" id="PRO_1000148520" description="UPF0335 protein Avi_3695">
    <location>
        <begin position="1"/>
        <end position="87"/>
    </location>
</feature>
<gene>
    <name type="ordered locus">Avi_3695</name>
</gene>
<comment type="similarity">
    <text evidence="1">Belongs to the UPF0335 family.</text>
</comment>
<reference key="1">
    <citation type="journal article" date="2009" name="J. Bacteriol.">
        <title>Genome sequences of three Agrobacterium biovars help elucidate the evolution of multichromosome genomes in bacteria.</title>
        <authorList>
            <person name="Slater S.C."/>
            <person name="Goldman B.S."/>
            <person name="Goodner B."/>
            <person name="Setubal J.C."/>
            <person name="Farrand S.K."/>
            <person name="Nester E.W."/>
            <person name="Burr T.J."/>
            <person name="Banta L."/>
            <person name="Dickerman A.W."/>
            <person name="Paulsen I."/>
            <person name="Otten L."/>
            <person name="Suen G."/>
            <person name="Welch R."/>
            <person name="Almeida N.F."/>
            <person name="Arnold F."/>
            <person name="Burton O.T."/>
            <person name="Du Z."/>
            <person name="Ewing A."/>
            <person name="Godsy E."/>
            <person name="Heisel S."/>
            <person name="Houmiel K.L."/>
            <person name="Jhaveri J."/>
            <person name="Lu J."/>
            <person name="Miller N.M."/>
            <person name="Norton S."/>
            <person name="Chen Q."/>
            <person name="Phoolcharoen W."/>
            <person name="Ohlin V."/>
            <person name="Ondrusek D."/>
            <person name="Pride N."/>
            <person name="Stricklin S.L."/>
            <person name="Sun J."/>
            <person name="Wheeler C."/>
            <person name="Wilson L."/>
            <person name="Zhu H."/>
            <person name="Wood D.W."/>
        </authorList>
    </citation>
    <scope>NUCLEOTIDE SEQUENCE [LARGE SCALE GENOMIC DNA]</scope>
    <source>
        <strain>ATCC BAA-846 / DSM 112012 / S4</strain>
    </source>
</reference>
<sequence>MSDAHGVARDQLRAFVERIERLEEEKKTIADDIKDVYGEAKGMGFDTKILKKVIALRKKDEQERMEEDLILDTYLHALGMIENPPEG</sequence>
<protein>
    <recommendedName>
        <fullName evidence="1">UPF0335 protein Avi_3695</fullName>
    </recommendedName>
</protein>
<keyword id="KW-1185">Reference proteome</keyword>
<organism>
    <name type="scientific">Allorhizobium ampelinum (strain ATCC BAA-846 / DSM 112012 / S4)</name>
    <name type="common">Agrobacterium vitis (strain S4)</name>
    <dbReference type="NCBI Taxonomy" id="311402"/>
    <lineage>
        <taxon>Bacteria</taxon>
        <taxon>Pseudomonadati</taxon>
        <taxon>Pseudomonadota</taxon>
        <taxon>Alphaproteobacteria</taxon>
        <taxon>Hyphomicrobiales</taxon>
        <taxon>Rhizobiaceae</taxon>
        <taxon>Rhizobium/Agrobacterium group</taxon>
        <taxon>Allorhizobium</taxon>
        <taxon>Allorhizobium ampelinum</taxon>
    </lineage>
</organism>
<accession>B9JS29</accession>
<dbReference type="EMBL" id="CP000633">
    <property type="protein sequence ID" value="ACM37657.1"/>
    <property type="molecule type" value="Genomic_DNA"/>
</dbReference>
<dbReference type="RefSeq" id="WP_015917069.1">
    <property type="nucleotide sequence ID" value="NC_011989.1"/>
</dbReference>
<dbReference type="SMR" id="B9JS29"/>
<dbReference type="STRING" id="311402.Avi_3695"/>
<dbReference type="KEGG" id="avi:Avi_3695"/>
<dbReference type="eggNOG" id="COG3750">
    <property type="taxonomic scope" value="Bacteria"/>
</dbReference>
<dbReference type="HOGENOM" id="CLU_158651_3_0_5"/>
<dbReference type="Proteomes" id="UP000001596">
    <property type="component" value="Chromosome 1"/>
</dbReference>
<dbReference type="GO" id="GO:0003677">
    <property type="term" value="F:DNA binding"/>
    <property type="evidence" value="ECO:0007669"/>
    <property type="project" value="InterPro"/>
</dbReference>
<dbReference type="HAMAP" id="MF_00797">
    <property type="entry name" value="UPF0335"/>
    <property type="match status" value="1"/>
</dbReference>
<dbReference type="InterPro" id="IPR018753">
    <property type="entry name" value="GapR-like"/>
</dbReference>
<dbReference type="InterPro" id="IPR046367">
    <property type="entry name" value="GapR-like_DNA-bd"/>
</dbReference>
<dbReference type="NCBIfam" id="NF010247">
    <property type="entry name" value="PRK13694.1"/>
    <property type="match status" value="1"/>
</dbReference>
<dbReference type="Pfam" id="PF10073">
    <property type="entry name" value="GapR_DNA-bd"/>
    <property type="match status" value="1"/>
</dbReference>
<name>Y3695_ALLAM</name>